<proteinExistence type="inferred from homology"/>
<accession>B1X776</accession>
<organism>
    <name type="scientific">Escherichia coli (strain K12 / DH10B)</name>
    <dbReference type="NCBI Taxonomy" id="316385"/>
    <lineage>
        <taxon>Bacteria</taxon>
        <taxon>Pseudomonadati</taxon>
        <taxon>Pseudomonadota</taxon>
        <taxon>Gammaproteobacteria</taxon>
        <taxon>Enterobacterales</taxon>
        <taxon>Enterobacteriaceae</taxon>
        <taxon>Escherichia</taxon>
    </lineage>
</organism>
<name>GLGX_ECODH</name>
<sequence>MTQLAIGKPAPLGAHYDGQGVNFTLFSAHAERVELCVFDANGQEHRYDLPGHSGDIWHGYLPDARPGLRYGYRVHGPWQPAEGHRFNPAKLLIDPCARQIDGEFKDNPLLHAGHNEPDYRDNAAIAPKCVVVVDHYDWEDDAPPRTPWGSTIIYEAHVKGLTYLHPEIPVEIRGTYKALGHPVMINYLKQLGITALELLPVAQFASEPRLQRMGLSNYWGYNPVAMFALHPAYACSPETALDEFRDAIKALHKAGIEVILDIVLNHSAELDLDGPLFSLRGIDNRSYYWIREDGDYHNWTGCGNTLNLSHPAVVDYASACLRYWVETCHVDGFRFDLAAVMGRTPEFRQDAPLFTAIQNCPVLSQVKLIAEPWDIAPGGYQVGNFPPLFAEWNDHFRDAARRFWLHYDLPLGAFAGRFAASSDVFKRNGRLPSAAINLVTAHDGFTLRDCVCFNHKHNEANGEENRDGTNNNYSNNHGKEGLGGSLDLVERRRDSIHALLTTLLLSQGTPMLLAGDEHGHSQHGNNNAYCQDNQLTWLDWSQASSGLTAFTAALIHLRKRIPALVENRWWEEGDGNVRWLNRYAQPLSTDEWQNGPKQLQILLSDRFLIAINATLEVTEIVLPAGEWHAIPPFAGEDNPVITAVWQGPAHGLCVFQR</sequence>
<gene>
    <name evidence="1" type="primary">glgX</name>
    <name type="ordered locus">ECDH10B_3605</name>
</gene>
<evidence type="ECO:0000255" key="1">
    <source>
        <dbReference type="HAMAP-Rule" id="MF_01248"/>
    </source>
</evidence>
<evidence type="ECO:0000256" key="2">
    <source>
        <dbReference type="SAM" id="MobiDB-lite"/>
    </source>
</evidence>
<protein>
    <recommendedName>
        <fullName evidence="1">Glycogen debranching enzyme</fullName>
        <ecNumber evidence="1">3.2.1.196</ecNumber>
    </recommendedName>
    <alternativeName>
        <fullName evidence="1">Limit dextrin alpha-1,6-maltotetraose-hydrolase</fullName>
    </alternativeName>
</protein>
<reference key="1">
    <citation type="journal article" date="2008" name="J. Bacteriol.">
        <title>The complete genome sequence of Escherichia coli DH10B: insights into the biology of a laboratory workhorse.</title>
        <authorList>
            <person name="Durfee T."/>
            <person name="Nelson R."/>
            <person name="Baldwin S."/>
            <person name="Plunkett G. III"/>
            <person name="Burland V."/>
            <person name="Mau B."/>
            <person name="Petrosino J.F."/>
            <person name="Qin X."/>
            <person name="Muzny D.M."/>
            <person name="Ayele M."/>
            <person name="Gibbs R.A."/>
            <person name="Csorgo B."/>
            <person name="Posfai G."/>
            <person name="Weinstock G.M."/>
            <person name="Blattner F.R."/>
        </authorList>
    </citation>
    <scope>NUCLEOTIDE SEQUENCE [LARGE SCALE GENOMIC DNA]</scope>
    <source>
        <strain>K12 / DH10B</strain>
    </source>
</reference>
<comment type="function">
    <text evidence="1">Removes maltotriose and maltotetraose chains that are attached by 1,6-alpha-linkage to the limit dextrin main chain, generating a debranched limit dextrin.</text>
</comment>
<comment type="catalytic activity">
    <reaction evidence="1">
        <text>Hydrolysis of (1-&gt;6)-alpha-D-glucosidic linkages to branches with degrees of polymerization of three or four glucose residues in limit dextrin.</text>
        <dbReference type="EC" id="3.2.1.196"/>
    </reaction>
</comment>
<comment type="pathway">
    <text evidence="1">Glycan degradation; glycogen degradation.</text>
</comment>
<comment type="similarity">
    <text evidence="1">Belongs to the glycosyl hydrolase 13 family.</text>
</comment>
<feature type="chain" id="PRO_1000139867" description="Glycogen debranching enzyme">
    <location>
        <begin position="1"/>
        <end position="657"/>
    </location>
</feature>
<feature type="region of interest" description="Disordered" evidence="2">
    <location>
        <begin position="458"/>
        <end position="479"/>
    </location>
</feature>
<feature type="compositionally biased region" description="Basic and acidic residues" evidence="2">
    <location>
        <begin position="458"/>
        <end position="467"/>
    </location>
</feature>
<feature type="active site" description="Nucleophile" evidence="1">
    <location>
        <position position="336"/>
    </location>
</feature>
<feature type="active site" description="Proton donor" evidence="1">
    <location>
        <position position="371"/>
    </location>
</feature>
<feature type="site" description="Transition state stabilizer" evidence="1">
    <location>
        <position position="443"/>
    </location>
</feature>
<keyword id="KW-0119">Carbohydrate metabolism</keyword>
<keyword id="KW-0321">Glycogen metabolism</keyword>
<keyword id="KW-0326">Glycosidase</keyword>
<keyword id="KW-0378">Hydrolase</keyword>
<dbReference type="EC" id="3.2.1.196" evidence="1"/>
<dbReference type="EMBL" id="CP000948">
    <property type="protein sequence ID" value="ACB04488.1"/>
    <property type="molecule type" value="Genomic_DNA"/>
</dbReference>
<dbReference type="RefSeq" id="WP_000192523.1">
    <property type="nucleotide sequence ID" value="NC_010473.1"/>
</dbReference>
<dbReference type="SMR" id="B1X776"/>
<dbReference type="CAZy" id="CBM48">
    <property type="family name" value="Carbohydrate-Binding Module Family 48"/>
</dbReference>
<dbReference type="CAZy" id="GH13">
    <property type="family name" value="Glycoside Hydrolase Family 13"/>
</dbReference>
<dbReference type="GeneID" id="75202276"/>
<dbReference type="KEGG" id="ecd:ECDH10B_3605"/>
<dbReference type="HOGENOM" id="CLU_011725_1_1_6"/>
<dbReference type="UniPathway" id="UPA00165"/>
<dbReference type="GO" id="GO:0004133">
    <property type="term" value="F:glycogen debranching enzyme activity"/>
    <property type="evidence" value="ECO:0007669"/>
    <property type="project" value="UniProtKB-UniRule"/>
</dbReference>
<dbReference type="GO" id="GO:0004553">
    <property type="term" value="F:hydrolase activity, hydrolyzing O-glycosyl compounds"/>
    <property type="evidence" value="ECO:0007669"/>
    <property type="project" value="InterPro"/>
</dbReference>
<dbReference type="GO" id="GO:0005980">
    <property type="term" value="P:glycogen catabolic process"/>
    <property type="evidence" value="ECO:0007669"/>
    <property type="project" value="UniProtKB-UniRule"/>
</dbReference>
<dbReference type="CDD" id="cd11326">
    <property type="entry name" value="AmyAc_Glg_debranch"/>
    <property type="match status" value="1"/>
</dbReference>
<dbReference type="CDD" id="cd02856">
    <property type="entry name" value="E_set_GDE_Isoamylase_N"/>
    <property type="match status" value="1"/>
</dbReference>
<dbReference type="FunFam" id="2.60.40.10:FF:000468">
    <property type="entry name" value="Glycogen debranching enzyme"/>
    <property type="match status" value="1"/>
</dbReference>
<dbReference type="FunFam" id="3.20.20.80:FF:000031">
    <property type="entry name" value="Glycogen debranching enzyme"/>
    <property type="match status" value="1"/>
</dbReference>
<dbReference type="Gene3D" id="3.20.20.80">
    <property type="entry name" value="Glycosidases"/>
    <property type="match status" value="1"/>
</dbReference>
<dbReference type="Gene3D" id="2.60.40.1180">
    <property type="entry name" value="Golgi alpha-mannosidase II"/>
    <property type="match status" value="1"/>
</dbReference>
<dbReference type="Gene3D" id="2.60.40.10">
    <property type="entry name" value="Immunoglobulins"/>
    <property type="match status" value="1"/>
</dbReference>
<dbReference type="HAMAP" id="MF_01248">
    <property type="entry name" value="GlgX"/>
    <property type="match status" value="1"/>
</dbReference>
<dbReference type="InterPro" id="IPR040784">
    <property type="entry name" value="GlgX_C"/>
</dbReference>
<dbReference type="InterPro" id="IPR044505">
    <property type="entry name" value="GlgX_Isoamylase_N_E_set"/>
</dbReference>
<dbReference type="InterPro" id="IPR006047">
    <property type="entry name" value="Glyco_hydro_13_cat_dom"/>
</dbReference>
<dbReference type="InterPro" id="IPR004193">
    <property type="entry name" value="Glyco_hydro_13_N"/>
</dbReference>
<dbReference type="InterPro" id="IPR013780">
    <property type="entry name" value="Glyco_hydro_b"/>
</dbReference>
<dbReference type="InterPro" id="IPR022844">
    <property type="entry name" value="Glycogen_debranch_bac"/>
</dbReference>
<dbReference type="InterPro" id="IPR011837">
    <property type="entry name" value="Glycogen_debranch_GlgX"/>
</dbReference>
<dbReference type="InterPro" id="IPR017853">
    <property type="entry name" value="Glycoside_hydrolase_SF"/>
</dbReference>
<dbReference type="InterPro" id="IPR013783">
    <property type="entry name" value="Ig-like_fold"/>
</dbReference>
<dbReference type="InterPro" id="IPR014756">
    <property type="entry name" value="Ig_E-set"/>
</dbReference>
<dbReference type="NCBIfam" id="TIGR02100">
    <property type="entry name" value="glgX_debranch"/>
    <property type="match status" value="1"/>
</dbReference>
<dbReference type="NCBIfam" id="NF002983">
    <property type="entry name" value="PRK03705.1"/>
    <property type="match status" value="1"/>
</dbReference>
<dbReference type="PANTHER" id="PTHR43002">
    <property type="entry name" value="GLYCOGEN DEBRANCHING ENZYME"/>
    <property type="match status" value="1"/>
</dbReference>
<dbReference type="Pfam" id="PF00128">
    <property type="entry name" value="Alpha-amylase"/>
    <property type="match status" value="1"/>
</dbReference>
<dbReference type="Pfam" id="PF02922">
    <property type="entry name" value="CBM_48"/>
    <property type="match status" value="1"/>
</dbReference>
<dbReference type="Pfam" id="PF18390">
    <property type="entry name" value="GlgX_C"/>
    <property type="match status" value="1"/>
</dbReference>
<dbReference type="SMART" id="SM00642">
    <property type="entry name" value="Aamy"/>
    <property type="match status" value="1"/>
</dbReference>
<dbReference type="SUPFAM" id="SSF51445">
    <property type="entry name" value="(Trans)glycosidases"/>
    <property type="match status" value="1"/>
</dbReference>
<dbReference type="SUPFAM" id="SSF81296">
    <property type="entry name" value="E set domains"/>
    <property type="match status" value="1"/>
</dbReference>